<gene>
    <name evidence="1" type="primary">rplR</name>
    <name type="ordered locus">Mfla_0295</name>
</gene>
<sequence>MSNVNSRLRRARKTRAKIAELKAIRLSVHRSNCHIYAQIIAETGDKVLASASTLEVEVRKDIKNGGNIAAAALVGKRIAEKAKAAGITTVAFDRSGYKYHGRIKALADAAREHGLSF</sequence>
<accession>Q1H4M1</accession>
<comment type="function">
    <text evidence="1">This is one of the proteins that bind and probably mediate the attachment of the 5S RNA into the large ribosomal subunit, where it forms part of the central protuberance.</text>
</comment>
<comment type="subunit">
    <text evidence="1">Part of the 50S ribosomal subunit; part of the 5S rRNA/L5/L18/L25 subcomplex. Contacts the 5S and 23S rRNAs.</text>
</comment>
<comment type="similarity">
    <text evidence="1">Belongs to the universal ribosomal protein uL18 family.</text>
</comment>
<dbReference type="EMBL" id="CP000284">
    <property type="protein sequence ID" value="ABE48566.1"/>
    <property type="molecule type" value="Genomic_DNA"/>
</dbReference>
<dbReference type="RefSeq" id="WP_011478663.1">
    <property type="nucleotide sequence ID" value="NC_007947.1"/>
</dbReference>
<dbReference type="SMR" id="Q1H4M1"/>
<dbReference type="STRING" id="265072.Mfla_0295"/>
<dbReference type="KEGG" id="mfa:Mfla_0295"/>
<dbReference type="eggNOG" id="COG0256">
    <property type="taxonomic scope" value="Bacteria"/>
</dbReference>
<dbReference type="HOGENOM" id="CLU_098841_0_1_4"/>
<dbReference type="OrthoDB" id="9810939at2"/>
<dbReference type="Proteomes" id="UP000002440">
    <property type="component" value="Chromosome"/>
</dbReference>
<dbReference type="GO" id="GO:0022625">
    <property type="term" value="C:cytosolic large ribosomal subunit"/>
    <property type="evidence" value="ECO:0007669"/>
    <property type="project" value="TreeGrafter"/>
</dbReference>
<dbReference type="GO" id="GO:0008097">
    <property type="term" value="F:5S rRNA binding"/>
    <property type="evidence" value="ECO:0007669"/>
    <property type="project" value="TreeGrafter"/>
</dbReference>
<dbReference type="GO" id="GO:0003735">
    <property type="term" value="F:structural constituent of ribosome"/>
    <property type="evidence" value="ECO:0007669"/>
    <property type="project" value="InterPro"/>
</dbReference>
<dbReference type="GO" id="GO:0006412">
    <property type="term" value="P:translation"/>
    <property type="evidence" value="ECO:0007669"/>
    <property type="project" value="UniProtKB-UniRule"/>
</dbReference>
<dbReference type="CDD" id="cd00432">
    <property type="entry name" value="Ribosomal_L18_L5e"/>
    <property type="match status" value="1"/>
</dbReference>
<dbReference type="FunFam" id="3.30.420.100:FF:000001">
    <property type="entry name" value="50S ribosomal protein L18"/>
    <property type="match status" value="1"/>
</dbReference>
<dbReference type="Gene3D" id="3.30.420.100">
    <property type="match status" value="1"/>
</dbReference>
<dbReference type="HAMAP" id="MF_01337_B">
    <property type="entry name" value="Ribosomal_uL18_B"/>
    <property type="match status" value="1"/>
</dbReference>
<dbReference type="InterPro" id="IPR004389">
    <property type="entry name" value="Ribosomal_uL18_bac-type"/>
</dbReference>
<dbReference type="InterPro" id="IPR005484">
    <property type="entry name" value="Ribosomal_uL18_bac/euk"/>
</dbReference>
<dbReference type="NCBIfam" id="TIGR00060">
    <property type="entry name" value="L18_bact"/>
    <property type="match status" value="1"/>
</dbReference>
<dbReference type="PANTHER" id="PTHR12899">
    <property type="entry name" value="39S RIBOSOMAL PROTEIN L18, MITOCHONDRIAL"/>
    <property type="match status" value="1"/>
</dbReference>
<dbReference type="PANTHER" id="PTHR12899:SF3">
    <property type="entry name" value="LARGE RIBOSOMAL SUBUNIT PROTEIN UL18M"/>
    <property type="match status" value="1"/>
</dbReference>
<dbReference type="Pfam" id="PF00861">
    <property type="entry name" value="Ribosomal_L18p"/>
    <property type="match status" value="1"/>
</dbReference>
<dbReference type="SUPFAM" id="SSF53137">
    <property type="entry name" value="Translational machinery components"/>
    <property type="match status" value="1"/>
</dbReference>
<proteinExistence type="inferred from homology"/>
<feature type="chain" id="PRO_0000251328" description="Large ribosomal subunit protein uL18">
    <location>
        <begin position="1"/>
        <end position="117"/>
    </location>
</feature>
<reference key="1">
    <citation type="submission" date="2006-03" db="EMBL/GenBank/DDBJ databases">
        <title>Complete sequence of Methylobacillus flagellatus KT.</title>
        <authorList>
            <consortium name="US DOE Joint Genome Institute"/>
            <person name="Copeland A."/>
            <person name="Lucas S."/>
            <person name="Lapidus A."/>
            <person name="Barry K."/>
            <person name="Detter J.C."/>
            <person name="Glavina del Rio T."/>
            <person name="Hammon N."/>
            <person name="Israni S."/>
            <person name="Dalin E."/>
            <person name="Tice H."/>
            <person name="Pitluck S."/>
            <person name="Brettin T."/>
            <person name="Bruce D."/>
            <person name="Han C."/>
            <person name="Tapia R."/>
            <person name="Saunders E."/>
            <person name="Gilna P."/>
            <person name="Schmutz J."/>
            <person name="Larimer F."/>
            <person name="Land M."/>
            <person name="Kyrpides N."/>
            <person name="Anderson I."/>
            <person name="Richardson P."/>
        </authorList>
    </citation>
    <scope>NUCLEOTIDE SEQUENCE [LARGE SCALE GENOMIC DNA]</scope>
    <source>
        <strain>ATCC 51484 / DSM 6875 / VKM B-1610 / KT</strain>
    </source>
</reference>
<keyword id="KW-1185">Reference proteome</keyword>
<keyword id="KW-0687">Ribonucleoprotein</keyword>
<keyword id="KW-0689">Ribosomal protein</keyword>
<keyword id="KW-0694">RNA-binding</keyword>
<keyword id="KW-0699">rRNA-binding</keyword>
<evidence type="ECO:0000255" key="1">
    <source>
        <dbReference type="HAMAP-Rule" id="MF_01337"/>
    </source>
</evidence>
<evidence type="ECO:0000305" key="2"/>
<organism>
    <name type="scientific">Methylobacillus flagellatus (strain ATCC 51484 / DSM 6875 / VKM B-1610 / KT)</name>
    <dbReference type="NCBI Taxonomy" id="265072"/>
    <lineage>
        <taxon>Bacteria</taxon>
        <taxon>Pseudomonadati</taxon>
        <taxon>Pseudomonadota</taxon>
        <taxon>Betaproteobacteria</taxon>
        <taxon>Nitrosomonadales</taxon>
        <taxon>Methylophilaceae</taxon>
        <taxon>Methylobacillus</taxon>
    </lineage>
</organism>
<protein>
    <recommendedName>
        <fullName evidence="1">Large ribosomal subunit protein uL18</fullName>
    </recommendedName>
    <alternativeName>
        <fullName evidence="2">50S ribosomal protein L18</fullName>
    </alternativeName>
</protein>
<name>RL18_METFK</name>